<proteinExistence type="inferred from homology"/>
<feature type="chain" id="PRO_0000235486" description="Phospho-N-acetylmuramoyl-pentapeptide-transferase">
    <location>
        <begin position="1"/>
        <end position="321"/>
    </location>
</feature>
<feature type="transmembrane region" description="Helical" evidence="1">
    <location>
        <begin position="1"/>
        <end position="21"/>
    </location>
</feature>
<feature type="transmembrane region" description="Helical" evidence="1">
    <location>
        <begin position="50"/>
        <end position="70"/>
    </location>
</feature>
<feature type="transmembrane region" description="Helical" evidence="1">
    <location>
        <begin position="76"/>
        <end position="96"/>
    </location>
</feature>
<feature type="transmembrane region" description="Helical" evidence="1">
    <location>
        <begin position="112"/>
        <end position="132"/>
    </location>
</feature>
<feature type="transmembrane region" description="Helical" evidence="1">
    <location>
        <begin position="140"/>
        <end position="160"/>
    </location>
</feature>
<feature type="transmembrane region" description="Helical" evidence="1">
    <location>
        <begin position="176"/>
        <end position="196"/>
    </location>
</feature>
<feature type="transmembrane region" description="Helical" evidence="1">
    <location>
        <begin position="200"/>
        <end position="220"/>
    </location>
</feature>
<feature type="transmembrane region" description="Helical" evidence="1">
    <location>
        <begin position="225"/>
        <end position="245"/>
    </location>
</feature>
<feature type="transmembrane region" description="Helical" evidence="1">
    <location>
        <begin position="250"/>
        <end position="270"/>
    </location>
</feature>
<feature type="transmembrane region" description="Helical" evidence="1">
    <location>
        <begin position="300"/>
        <end position="320"/>
    </location>
</feature>
<reference key="1">
    <citation type="journal article" date="2005" name="J. Bacteriol.">
        <title>Whole-genome sequencing of Staphylococcus haemolyticus uncovers the extreme plasticity of its genome and the evolution of human-colonizing staphylococcal species.</title>
        <authorList>
            <person name="Takeuchi F."/>
            <person name="Watanabe S."/>
            <person name="Baba T."/>
            <person name="Yuzawa H."/>
            <person name="Ito T."/>
            <person name="Morimoto Y."/>
            <person name="Kuroda M."/>
            <person name="Cui L."/>
            <person name="Takahashi M."/>
            <person name="Ankai A."/>
            <person name="Baba S."/>
            <person name="Fukui S."/>
            <person name="Lee J.C."/>
            <person name="Hiramatsu K."/>
        </authorList>
    </citation>
    <scope>NUCLEOTIDE SEQUENCE [LARGE SCALE GENOMIC DNA]</scope>
    <source>
        <strain>JCSC1435</strain>
    </source>
</reference>
<gene>
    <name evidence="1" type="primary">mraY</name>
    <name type="ordered locus">SH1733</name>
</gene>
<comment type="function">
    <text evidence="1">Catalyzes the initial step of the lipid cycle reactions in the biosynthesis of the cell wall peptidoglycan: transfers peptidoglycan precursor phospho-MurNAc-pentapeptide from UDP-MurNAc-pentapeptide onto the lipid carrier undecaprenyl phosphate, yielding undecaprenyl-pyrophosphoryl-MurNAc-pentapeptide, known as lipid I.</text>
</comment>
<comment type="catalytic activity">
    <reaction evidence="1">
        <text>UDP-N-acetyl-alpha-D-muramoyl-L-alanyl-gamma-D-glutamyl-L-lysyl-D-alanyl-D-alanine + di-trans,octa-cis-undecaprenyl phosphate = Mur2Ac(oyl-L-Ala-gamma-D-Glu-L-Lys-D-Ala-D-Ala)-di-trans,octa-cis-undecaprenyl diphosphate + UMP</text>
        <dbReference type="Rhea" id="RHEA:21920"/>
        <dbReference type="ChEBI" id="CHEBI:57865"/>
        <dbReference type="ChEBI" id="CHEBI:60032"/>
        <dbReference type="ChEBI" id="CHEBI:60392"/>
        <dbReference type="ChEBI" id="CHEBI:70758"/>
        <dbReference type="EC" id="2.7.8.13"/>
    </reaction>
</comment>
<comment type="cofactor">
    <cofactor evidence="1">
        <name>Mg(2+)</name>
        <dbReference type="ChEBI" id="CHEBI:18420"/>
    </cofactor>
</comment>
<comment type="pathway">
    <text evidence="1">Cell wall biogenesis; peptidoglycan biosynthesis.</text>
</comment>
<comment type="subcellular location">
    <subcellularLocation>
        <location evidence="1">Cell membrane</location>
        <topology evidence="1">Multi-pass membrane protein</topology>
    </subcellularLocation>
</comment>
<comment type="similarity">
    <text evidence="1">Belongs to the glycosyltransferase 4 family. MraY subfamily.</text>
</comment>
<accession>Q4L5N3</accession>
<protein>
    <recommendedName>
        <fullName evidence="1">Phospho-N-acetylmuramoyl-pentapeptide-transferase</fullName>
        <ecNumber evidence="1">2.7.8.13</ecNumber>
    </recommendedName>
    <alternativeName>
        <fullName evidence="1">UDP-MurNAc-pentapeptide phosphotransferase</fullName>
    </alternativeName>
</protein>
<dbReference type="EC" id="2.7.8.13" evidence="1"/>
<dbReference type="EMBL" id="AP006716">
    <property type="protein sequence ID" value="BAE05042.1"/>
    <property type="molecule type" value="Genomic_DNA"/>
</dbReference>
<dbReference type="RefSeq" id="WP_011276018.1">
    <property type="nucleotide sequence ID" value="NC_007168.1"/>
</dbReference>
<dbReference type="SMR" id="Q4L5N3"/>
<dbReference type="GeneID" id="93781111"/>
<dbReference type="KEGG" id="sha:SH1733"/>
<dbReference type="eggNOG" id="COG0472">
    <property type="taxonomic scope" value="Bacteria"/>
</dbReference>
<dbReference type="HOGENOM" id="CLU_023982_0_0_9"/>
<dbReference type="OrthoDB" id="9805475at2"/>
<dbReference type="UniPathway" id="UPA00219"/>
<dbReference type="Proteomes" id="UP000000543">
    <property type="component" value="Chromosome"/>
</dbReference>
<dbReference type="GO" id="GO:0005886">
    <property type="term" value="C:plasma membrane"/>
    <property type="evidence" value="ECO:0007669"/>
    <property type="project" value="UniProtKB-SubCell"/>
</dbReference>
<dbReference type="GO" id="GO:0046872">
    <property type="term" value="F:metal ion binding"/>
    <property type="evidence" value="ECO:0007669"/>
    <property type="project" value="UniProtKB-KW"/>
</dbReference>
<dbReference type="GO" id="GO:0008963">
    <property type="term" value="F:phospho-N-acetylmuramoyl-pentapeptide-transferase activity"/>
    <property type="evidence" value="ECO:0007669"/>
    <property type="project" value="UniProtKB-UniRule"/>
</dbReference>
<dbReference type="GO" id="GO:0051301">
    <property type="term" value="P:cell division"/>
    <property type="evidence" value="ECO:0007669"/>
    <property type="project" value="UniProtKB-KW"/>
</dbReference>
<dbReference type="GO" id="GO:0071555">
    <property type="term" value="P:cell wall organization"/>
    <property type="evidence" value="ECO:0007669"/>
    <property type="project" value="UniProtKB-KW"/>
</dbReference>
<dbReference type="GO" id="GO:0009252">
    <property type="term" value="P:peptidoglycan biosynthetic process"/>
    <property type="evidence" value="ECO:0007669"/>
    <property type="project" value="UniProtKB-UniRule"/>
</dbReference>
<dbReference type="GO" id="GO:0008360">
    <property type="term" value="P:regulation of cell shape"/>
    <property type="evidence" value="ECO:0007669"/>
    <property type="project" value="UniProtKB-KW"/>
</dbReference>
<dbReference type="CDD" id="cd06852">
    <property type="entry name" value="GT_MraY"/>
    <property type="match status" value="1"/>
</dbReference>
<dbReference type="HAMAP" id="MF_00038">
    <property type="entry name" value="MraY"/>
    <property type="match status" value="1"/>
</dbReference>
<dbReference type="InterPro" id="IPR000715">
    <property type="entry name" value="Glycosyl_transferase_4"/>
</dbReference>
<dbReference type="InterPro" id="IPR003524">
    <property type="entry name" value="PNAcMuramoyl-5peptid_Trfase"/>
</dbReference>
<dbReference type="InterPro" id="IPR018480">
    <property type="entry name" value="PNAcMuramoyl-5peptid_Trfase_CS"/>
</dbReference>
<dbReference type="NCBIfam" id="TIGR00445">
    <property type="entry name" value="mraY"/>
    <property type="match status" value="1"/>
</dbReference>
<dbReference type="PANTHER" id="PTHR22926">
    <property type="entry name" value="PHOSPHO-N-ACETYLMURAMOYL-PENTAPEPTIDE-TRANSFERASE"/>
    <property type="match status" value="1"/>
</dbReference>
<dbReference type="PANTHER" id="PTHR22926:SF5">
    <property type="entry name" value="PHOSPHO-N-ACETYLMURAMOYL-PENTAPEPTIDE-TRANSFERASE HOMOLOG"/>
    <property type="match status" value="1"/>
</dbReference>
<dbReference type="Pfam" id="PF00953">
    <property type="entry name" value="Glycos_transf_4"/>
    <property type="match status" value="1"/>
</dbReference>
<dbReference type="PROSITE" id="PS01347">
    <property type="entry name" value="MRAY_1"/>
    <property type="match status" value="1"/>
</dbReference>
<dbReference type="PROSITE" id="PS01348">
    <property type="entry name" value="MRAY_2"/>
    <property type="match status" value="1"/>
</dbReference>
<organism>
    <name type="scientific">Staphylococcus haemolyticus (strain JCSC1435)</name>
    <dbReference type="NCBI Taxonomy" id="279808"/>
    <lineage>
        <taxon>Bacteria</taxon>
        <taxon>Bacillati</taxon>
        <taxon>Bacillota</taxon>
        <taxon>Bacilli</taxon>
        <taxon>Bacillales</taxon>
        <taxon>Staphylococcaceae</taxon>
        <taxon>Staphylococcus</taxon>
    </lineage>
</organism>
<keyword id="KW-0131">Cell cycle</keyword>
<keyword id="KW-0132">Cell division</keyword>
<keyword id="KW-1003">Cell membrane</keyword>
<keyword id="KW-0133">Cell shape</keyword>
<keyword id="KW-0961">Cell wall biogenesis/degradation</keyword>
<keyword id="KW-0460">Magnesium</keyword>
<keyword id="KW-0472">Membrane</keyword>
<keyword id="KW-0479">Metal-binding</keyword>
<keyword id="KW-0573">Peptidoglycan synthesis</keyword>
<keyword id="KW-0808">Transferase</keyword>
<keyword id="KW-0812">Transmembrane</keyword>
<keyword id="KW-1133">Transmembrane helix</keyword>
<sequence length="321" mass="35265">MLFILAVIALLITFILVPILIPTLKRMKFGQSIREEGPQSHMKKTGTPTMGGLTFLISIIITSIIAIFFVDNSNPIILLLFVTIGFGLIGFIDDYIIVVKKNNQGLTSKQKFLAQIAIAVVFFLLSDVFHLVEFSTNLNIPFTNISIPLSFAYVIFIVFWQVGFSNAVNLTDGLDGLATGLSIIGFTMYAIMSFVLDSPAIGAFCIIMIFALLGFLPYNLNPAKVFMGDTGSLALGGIFATISIMLNQELSLLLIGLVFVIETASVMLQVASYKLTKKRIFKMSPIHHHFELSGWGEWKVVTVFWTAGLISGLIGLWIGVH</sequence>
<name>MRAY_STAHJ</name>
<evidence type="ECO:0000255" key="1">
    <source>
        <dbReference type="HAMAP-Rule" id="MF_00038"/>
    </source>
</evidence>